<evidence type="ECO:0000255" key="1">
    <source>
        <dbReference type="HAMAP-Rule" id="MF_01515"/>
    </source>
</evidence>
<reference key="1">
    <citation type="submission" date="2008-04" db="EMBL/GenBank/DDBJ databases">
        <title>Complete sequence of chromosome of Exiguobacterium sibiricum 255-15.</title>
        <authorList>
            <consortium name="US DOE Joint Genome Institute"/>
            <person name="Copeland A."/>
            <person name="Lucas S."/>
            <person name="Lapidus A."/>
            <person name="Glavina del Rio T."/>
            <person name="Dalin E."/>
            <person name="Tice H."/>
            <person name="Bruce D."/>
            <person name="Goodwin L."/>
            <person name="Pitluck S."/>
            <person name="Kiss H."/>
            <person name="Chertkov O."/>
            <person name="Monk C."/>
            <person name="Brettin T."/>
            <person name="Detter J.C."/>
            <person name="Han C."/>
            <person name="Kuske C.R."/>
            <person name="Schmutz J."/>
            <person name="Larimer F."/>
            <person name="Land M."/>
            <person name="Hauser L."/>
            <person name="Kyrpides N."/>
            <person name="Mikhailova N."/>
            <person name="Vishnivetskaya T."/>
            <person name="Rodrigues D.F."/>
            <person name="Gilichinsky D."/>
            <person name="Tiedje J."/>
            <person name="Richardson P."/>
        </authorList>
    </citation>
    <scope>NUCLEOTIDE SEQUENCE [LARGE SCALE GENOMIC DNA]</scope>
    <source>
        <strain>DSM 17290 / CCUG 55495 / CIP 109462 / JCM 13490 / 255-15</strain>
    </source>
</reference>
<keyword id="KW-1003">Cell membrane</keyword>
<keyword id="KW-0472">Membrane</keyword>
<keyword id="KW-1185">Reference proteome</keyword>
<keyword id="KW-0812">Transmembrane</keyword>
<keyword id="KW-1133">Transmembrane helix</keyword>
<proteinExistence type="inferred from homology"/>
<name>Y2248_EXIS2</name>
<dbReference type="EMBL" id="CP001022">
    <property type="protein sequence ID" value="ACB61700.1"/>
    <property type="molecule type" value="Genomic_DNA"/>
</dbReference>
<dbReference type="RefSeq" id="WP_012371117.1">
    <property type="nucleotide sequence ID" value="NC_010556.1"/>
</dbReference>
<dbReference type="SMR" id="B1YKE7"/>
<dbReference type="STRING" id="262543.Exig_2248"/>
<dbReference type="KEGG" id="esi:Exig_2248"/>
<dbReference type="eggNOG" id="COG4843">
    <property type="taxonomic scope" value="Bacteria"/>
</dbReference>
<dbReference type="HOGENOM" id="CLU_106166_1_1_9"/>
<dbReference type="OrthoDB" id="48231at2"/>
<dbReference type="Proteomes" id="UP000001681">
    <property type="component" value="Chromosome"/>
</dbReference>
<dbReference type="GO" id="GO:0005886">
    <property type="term" value="C:plasma membrane"/>
    <property type="evidence" value="ECO:0007669"/>
    <property type="project" value="UniProtKB-SubCell"/>
</dbReference>
<dbReference type="CDD" id="cd16381">
    <property type="entry name" value="YitT_C_like_1"/>
    <property type="match status" value="1"/>
</dbReference>
<dbReference type="HAMAP" id="MF_01515">
    <property type="entry name" value="UPF0316"/>
    <property type="match status" value="1"/>
</dbReference>
<dbReference type="InterPro" id="IPR019264">
    <property type="entry name" value="DUF2179"/>
</dbReference>
<dbReference type="InterPro" id="IPR044035">
    <property type="entry name" value="DUF5698"/>
</dbReference>
<dbReference type="InterPro" id="IPR022930">
    <property type="entry name" value="UPF0316"/>
</dbReference>
<dbReference type="NCBIfam" id="NF003194">
    <property type="entry name" value="PRK04164.1-5"/>
    <property type="match status" value="1"/>
</dbReference>
<dbReference type="PANTHER" id="PTHR40060">
    <property type="entry name" value="UPF0316 PROTEIN YEBE"/>
    <property type="match status" value="1"/>
</dbReference>
<dbReference type="PANTHER" id="PTHR40060:SF1">
    <property type="entry name" value="UPF0316 PROTEIN YEBE"/>
    <property type="match status" value="1"/>
</dbReference>
<dbReference type="Pfam" id="PF10035">
    <property type="entry name" value="DUF2179"/>
    <property type="match status" value="1"/>
</dbReference>
<dbReference type="Pfam" id="PF18955">
    <property type="entry name" value="DUF5698"/>
    <property type="match status" value="1"/>
</dbReference>
<feature type="chain" id="PRO_1000198422" description="UPF0316 protein Exig_2248">
    <location>
        <begin position="1"/>
        <end position="171"/>
    </location>
</feature>
<feature type="transmembrane region" description="Helical" evidence="1">
    <location>
        <begin position="4"/>
        <end position="24"/>
    </location>
</feature>
<feature type="transmembrane region" description="Helical" evidence="1">
    <location>
        <begin position="31"/>
        <end position="51"/>
    </location>
</feature>
<feature type="transmembrane region" description="Helical" evidence="1">
    <location>
        <begin position="57"/>
        <end position="77"/>
    </location>
</feature>
<sequence>MGQILLILLLQLIYVPVLTLRTIMLVKGRTIIAGVLGTVETLIYIFALGIVFRDLTTVGMIVYALGFGLGILIGGFVERKLAIGYNMIQVHTQDFPAELIQVIRDNGFGVTHYQGQGRDGIRYRLDVLAARTRMKVLRNLVEEYEPKAFLVAFDSVDFKGGYMLKGLKRSQ</sequence>
<protein>
    <recommendedName>
        <fullName evidence="1">UPF0316 protein Exig_2248</fullName>
    </recommendedName>
</protein>
<comment type="subcellular location">
    <subcellularLocation>
        <location evidence="1">Cell membrane</location>
        <topology evidence="1">Multi-pass membrane protein</topology>
    </subcellularLocation>
</comment>
<comment type="similarity">
    <text evidence="1">Belongs to the UPF0316 family.</text>
</comment>
<gene>
    <name type="ordered locus">Exig_2248</name>
</gene>
<accession>B1YKE7</accession>
<organism>
    <name type="scientific">Exiguobacterium sibiricum (strain DSM 17290 / CCUG 55495 / CIP 109462 / JCM 13490 / 255-15)</name>
    <dbReference type="NCBI Taxonomy" id="262543"/>
    <lineage>
        <taxon>Bacteria</taxon>
        <taxon>Bacillati</taxon>
        <taxon>Bacillota</taxon>
        <taxon>Bacilli</taxon>
        <taxon>Bacillales</taxon>
        <taxon>Bacillales Family XII. Incertae Sedis</taxon>
        <taxon>Exiguobacterium</taxon>
    </lineage>
</organism>